<accession>Q3ZA58</accession>
<comment type="function">
    <text evidence="1">Part of the ABC transporter complex PstSACB involved in phosphate import. Responsible for energy coupling to the transport system.</text>
</comment>
<comment type="catalytic activity">
    <reaction evidence="1">
        <text>phosphate(out) + ATP + H2O = ADP + 2 phosphate(in) + H(+)</text>
        <dbReference type="Rhea" id="RHEA:24440"/>
        <dbReference type="ChEBI" id="CHEBI:15377"/>
        <dbReference type="ChEBI" id="CHEBI:15378"/>
        <dbReference type="ChEBI" id="CHEBI:30616"/>
        <dbReference type="ChEBI" id="CHEBI:43474"/>
        <dbReference type="ChEBI" id="CHEBI:456216"/>
        <dbReference type="EC" id="7.3.2.1"/>
    </reaction>
</comment>
<comment type="subunit">
    <text evidence="1">The complex is composed of two ATP-binding proteins (PstB), two transmembrane proteins (PstC and PstA) and a solute-binding protein (PstS).</text>
</comment>
<comment type="subcellular location">
    <subcellularLocation>
        <location evidence="1">Cell membrane</location>
        <topology evidence="1">Peripheral membrane protein</topology>
    </subcellularLocation>
</comment>
<comment type="similarity">
    <text evidence="1">Belongs to the ABC transporter superfamily. Phosphate importer (TC 3.A.1.7) family.</text>
</comment>
<gene>
    <name evidence="1" type="primary">pstB</name>
    <name type="ordered locus">DET0141</name>
</gene>
<sequence>MEPKIKIRGVNFFYHRHQVLKNINMDFPDRQITAIIGPSGCGKSTLLRALNRMNDLVSGARLEGEVLLDNENVYSPNLDVVNLRKRVGMVFQQPNPFPKSIFDNVAFGPRMLGITAQSRLNEIVEKSLHQAALWDEVKDNLHKSGMALSGGQQQRLCIARVLAVEPEVILMDEPCSALDPVSTMRIEELMQELKQNYTIAIVTHNMQQAARASDWTGFLLTGDLIEYGRTGEIFSRPKDKRTEDYITGRFG</sequence>
<organism>
    <name type="scientific">Dehalococcoides mccartyi (strain ATCC BAA-2266 / KCTC 15142 / 195)</name>
    <name type="common">Dehalococcoides ethenogenes (strain 195)</name>
    <dbReference type="NCBI Taxonomy" id="243164"/>
    <lineage>
        <taxon>Bacteria</taxon>
        <taxon>Bacillati</taxon>
        <taxon>Chloroflexota</taxon>
        <taxon>Dehalococcoidia</taxon>
        <taxon>Dehalococcoidales</taxon>
        <taxon>Dehalococcoidaceae</taxon>
        <taxon>Dehalococcoides</taxon>
    </lineage>
</organism>
<name>PSTB_DEHM1</name>
<dbReference type="EC" id="7.3.2.1" evidence="1"/>
<dbReference type="EMBL" id="CP000027">
    <property type="protein sequence ID" value="AAW40522.1"/>
    <property type="molecule type" value="Genomic_DNA"/>
</dbReference>
<dbReference type="RefSeq" id="WP_010935946.1">
    <property type="nucleotide sequence ID" value="NC_002936.3"/>
</dbReference>
<dbReference type="SMR" id="Q3ZA58"/>
<dbReference type="FunCoup" id="Q3ZA58">
    <property type="interactions" value="97"/>
</dbReference>
<dbReference type="STRING" id="243164.DET0141"/>
<dbReference type="GeneID" id="3230487"/>
<dbReference type="KEGG" id="det:DET0141"/>
<dbReference type="PATRIC" id="fig|243164.10.peg.132"/>
<dbReference type="eggNOG" id="COG1117">
    <property type="taxonomic scope" value="Bacteria"/>
</dbReference>
<dbReference type="HOGENOM" id="CLU_000604_1_22_0"/>
<dbReference type="InParanoid" id="Q3ZA58"/>
<dbReference type="Proteomes" id="UP000008289">
    <property type="component" value="Chromosome"/>
</dbReference>
<dbReference type="GO" id="GO:0005886">
    <property type="term" value="C:plasma membrane"/>
    <property type="evidence" value="ECO:0007669"/>
    <property type="project" value="UniProtKB-SubCell"/>
</dbReference>
<dbReference type="GO" id="GO:0005524">
    <property type="term" value="F:ATP binding"/>
    <property type="evidence" value="ECO:0007669"/>
    <property type="project" value="UniProtKB-KW"/>
</dbReference>
<dbReference type="GO" id="GO:0016887">
    <property type="term" value="F:ATP hydrolysis activity"/>
    <property type="evidence" value="ECO:0007669"/>
    <property type="project" value="InterPro"/>
</dbReference>
<dbReference type="GO" id="GO:0015415">
    <property type="term" value="F:ATPase-coupled phosphate ion transmembrane transporter activity"/>
    <property type="evidence" value="ECO:0007669"/>
    <property type="project" value="UniProtKB-EC"/>
</dbReference>
<dbReference type="GO" id="GO:0035435">
    <property type="term" value="P:phosphate ion transmembrane transport"/>
    <property type="evidence" value="ECO:0007669"/>
    <property type="project" value="InterPro"/>
</dbReference>
<dbReference type="CDD" id="cd03260">
    <property type="entry name" value="ABC_PstB_phosphate_transporter"/>
    <property type="match status" value="1"/>
</dbReference>
<dbReference type="FunFam" id="3.40.50.300:FF:000132">
    <property type="entry name" value="Phosphate import ATP-binding protein PstB"/>
    <property type="match status" value="1"/>
</dbReference>
<dbReference type="Gene3D" id="3.40.50.300">
    <property type="entry name" value="P-loop containing nucleotide triphosphate hydrolases"/>
    <property type="match status" value="1"/>
</dbReference>
<dbReference type="InterPro" id="IPR003593">
    <property type="entry name" value="AAA+_ATPase"/>
</dbReference>
<dbReference type="InterPro" id="IPR003439">
    <property type="entry name" value="ABC_transporter-like_ATP-bd"/>
</dbReference>
<dbReference type="InterPro" id="IPR017871">
    <property type="entry name" value="ABC_transporter-like_CS"/>
</dbReference>
<dbReference type="InterPro" id="IPR027417">
    <property type="entry name" value="P-loop_NTPase"/>
</dbReference>
<dbReference type="InterPro" id="IPR005670">
    <property type="entry name" value="PstB-like"/>
</dbReference>
<dbReference type="NCBIfam" id="TIGR00972">
    <property type="entry name" value="3a0107s01c2"/>
    <property type="match status" value="1"/>
</dbReference>
<dbReference type="PANTHER" id="PTHR43423">
    <property type="entry name" value="ABC TRANSPORTER I FAMILY MEMBER 17"/>
    <property type="match status" value="1"/>
</dbReference>
<dbReference type="PANTHER" id="PTHR43423:SF1">
    <property type="entry name" value="ABC TRANSPORTER I FAMILY MEMBER 17"/>
    <property type="match status" value="1"/>
</dbReference>
<dbReference type="Pfam" id="PF00005">
    <property type="entry name" value="ABC_tran"/>
    <property type="match status" value="1"/>
</dbReference>
<dbReference type="SMART" id="SM00382">
    <property type="entry name" value="AAA"/>
    <property type="match status" value="1"/>
</dbReference>
<dbReference type="SUPFAM" id="SSF52540">
    <property type="entry name" value="P-loop containing nucleoside triphosphate hydrolases"/>
    <property type="match status" value="1"/>
</dbReference>
<dbReference type="PROSITE" id="PS00211">
    <property type="entry name" value="ABC_TRANSPORTER_1"/>
    <property type="match status" value="1"/>
</dbReference>
<dbReference type="PROSITE" id="PS50893">
    <property type="entry name" value="ABC_TRANSPORTER_2"/>
    <property type="match status" value="1"/>
</dbReference>
<dbReference type="PROSITE" id="PS51238">
    <property type="entry name" value="PSTB"/>
    <property type="match status" value="1"/>
</dbReference>
<reference key="1">
    <citation type="journal article" date="2005" name="Science">
        <title>Genome sequence of the PCE-dechlorinating bacterium Dehalococcoides ethenogenes.</title>
        <authorList>
            <person name="Seshadri R."/>
            <person name="Adrian L."/>
            <person name="Fouts D.E."/>
            <person name="Eisen J.A."/>
            <person name="Phillippy A.M."/>
            <person name="Methe B.A."/>
            <person name="Ward N.L."/>
            <person name="Nelson W.C."/>
            <person name="DeBoy R.T."/>
            <person name="Khouri H.M."/>
            <person name="Kolonay J.F."/>
            <person name="Dodson R.J."/>
            <person name="Daugherty S.C."/>
            <person name="Brinkac L.M."/>
            <person name="Sullivan S.A."/>
            <person name="Madupu R."/>
            <person name="Nelson K.E."/>
            <person name="Kang K.H."/>
            <person name="Impraim M."/>
            <person name="Tran K."/>
            <person name="Robinson J.M."/>
            <person name="Forberger H.A."/>
            <person name="Fraser C.M."/>
            <person name="Zinder S.H."/>
            <person name="Heidelberg J.F."/>
        </authorList>
    </citation>
    <scope>NUCLEOTIDE SEQUENCE [LARGE SCALE GENOMIC DNA]</scope>
    <source>
        <strain>ATCC BAA-2266 / KCTC 15142 / 195</strain>
    </source>
</reference>
<proteinExistence type="inferred from homology"/>
<keyword id="KW-0067">ATP-binding</keyword>
<keyword id="KW-1003">Cell membrane</keyword>
<keyword id="KW-0472">Membrane</keyword>
<keyword id="KW-0547">Nucleotide-binding</keyword>
<keyword id="KW-0592">Phosphate transport</keyword>
<keyword id="KW-1278">Translocase</keyword>
<keyword id="KW-0813">Transport</keyword>
<protein>
    <recommendedName>
        <fullName evidence="1">Phosphate import ATP-binding protein PstB</fullName>
        <ecNumber evidence="1">7.3.2.1</ecNumber>
    </recommendedName>
    <alternativeName>
        <fullName evidence="1">ABC phosphate transporter</fullName>
    </alternativeName>
    <alternativeName>
        <fullName evidence="1">Phosphate-transporting ATPase</fullName>
    </alternativeName>
</protein>
<feature type="chain" id="PRO_0000272445" description="Phosphate import ATP-binding protein PstB">
    <location>
        <begin position="1"/>
        <end position="251"/>
    </location>
</feature>
<feature type="domain" description="ABC transporter" evidence="1">
    <location>
        <begin position="5"/>
        <end position="246"/>
    </location>
</feature>
<feature type="binding site" evidence="1">
    <location>
        <begin position="37"/>
        <end position="44"/>
    </location>
    <ligand>
        <name>ATP</name>
        <dbReference type="ChEBI" id="CHEBI:30616"/>
    </ligand>
</feature>
<evidence type="ECO:0000255" key="1">
    <source>
        <dbReference type="HAMAP-Rule" id="MF_01702"/>
    </source>
</evidence>